<dbReference type="EMBL" id="L77117">
    <property type="protein sequence ID" value="AAB98871.1"/>
    <property type="molecule type" value="Genomic_DNA"/>
</dbReference>
<dbReference type="PIR" id="B64408">
    <property type="entry name" value="B64408"/>
</dbReference>
<dbReference type="RefSeq" id="WP_010870381.1">
    <property type="nucleotide sequence ID" value="NC_000909.1"/>
</dbReference>
<dbReference type="SMR" id="Q58276"/>
<dbReference type="FunCoup" id="Q58276">
    <property type="interactions" value="128"/>
</dbReference>
<dbReference type="STRING" id="243232.MJ_0866"/>
<dbReference type="PaxDb" id="243232-MJ_0866"/>
<dbReference type="EnsemblBacteria" id="AAB98871">
    <property type="protein sequence ID" value="AAB98871"/>
    <property type="gene ID" value="MJ_0866"/>
</dbReference>
<dbReference type="GeneID" id="1451755"/>
<dbReference type="KEGG" id="mja:MJ_0866"/>
<dbReference type="eggNOG" id="arCOG00419">
    <property type="taxonomic scope" value="Archaea"/>
</dbReference>
<dbReference type="HOGENOM" id="CLU_056776_3_2_2"/>
<dbReference type="InParanoid" id="Q58276"/>
<dbReference type="OrthoDB" id="26806at2157"/>
<dbReference type="PhylomeDB" id="Q58276"/>
<dbReference type="Proteomes" id="UP000000805">
    <property type="component" value="Chromosome"/>
</dbReference>
<dbReference type="GO" id="GO:0005737">
    <property type="term" value="C:cytoplasm"/>
    <property type="evidence" value="ECO:0000318"/>
    <property type="project" value="GO_Central"/>
</dbReference>
<dbReference type="GO" id="GO:0016787">
    <property type="term" value="F:hydrolase activity"/>
    <property type="evidence" value="ECO:0000318"/>
    <property type="project" value="GO_Central"/>
</dbReference>
<dbReference type="CDD" id="cd01277">
    <property type="entry name" value="HINT_subgroup"/>
    <property type="match status" value="1"/>
</dbReference>
<dbReference type="Gene3D" id="3.30.428.10">
    <property type="entry name" value="HIT-like"/>
    <property type="match status" value="1"/>
</dbReference>
<dbReference type="InterPro" id="IPR039384">
    <property type="entry name" value="HINT"/>
</dbReference>
<dbReference type="InterPro" id="IPR019808">
    <property type="entry name" value="Histidine_triad_CS"/>
</dbReference>
<dbReference type="InterPro" id="IPR001310">
    <property type="entry name" value="Histidine_triad_HIT"/>
</dbReference>
<dbReference type="InterPro" id="IPR011146">
    <property type="entry name" value="HIT-like"/>
</dbReference>
<dbReference type="InterPro" id="IPR036265">
    <property type="entry name" value="HIT-like_sf"/>
</dbReference>
<dbReference type="PANTHER" id="PTHR46648:SF1">
    <property type="entry name" value="ADENOSINE 5'-MONOPHOSPHORAMIDASE HNT1"/>
    <property type="match status" value="1"/>
</dbReference>
<dbReference type="PANTHER" id="PTHR46648">
    <property type="entry name" value="HIT FAMILY PROTEIN 1"/>
    <property type="match status" value="1"/>
</dbReference>
<dbReference type="Pfam" id="PF01230">
    <property type="entry name" value="HIT"/>
    <property type="match status" value="1"/>
</dbReference>
<dbReference type="PRINTS" id="PR00332">
    <property type="entry name" value="HISTRIAD"/>
</dbReference>
<dbReference type="SUPFAM" id="SSF54197">
    <property type="entry name" value="HIT-like"/>
    <property type="match status" value="1"/>
</dbReference>
<dbReference type="PROSITE" id="PS00892">
    <property type="entry name" value="HIT_1"/>
    <property type="match status" value="1"/>
</dbReference>
<dbReference type="PROSITE" id="PS51084">
    <property type="entry name" value="HIT_2"/>
    <property type="match status" value="1"/>
</dbReference>
<gene>
    <name type="ordered locus">MJ0866</name>
</gene>
<evidence type="ECO:0000255" key="1">
    <source>
        <dbReference type="PROSITE-ProRule" id="PRU00464"/>
    </source>
</evidence>
<reference key="1">
    <citation type="journal article" date="1996" name="Science">
        <title>Complete genome sequence of the methanogenic archaeon, Methanococcus jannaschii.</title>
        <authorList>
            <person name="Bult C.J."/>
            <person name="White O."/>
            <person name="Olsen G.J."/>
            <person name="Zhou L."/>
            <person name="Fleischmann R.D."/>
            <person name="Sutton G.G."/>
            <person name="Blake J.A."/>
            <person name="FitzGerald L.M."/>
            <person name="Clayton R.A."/>
            <person name="Gocayne J.D."/>
            <person name="Kerlavage A.R."/>
            <person name="Dougherty B.A."/>
            <person name="Tomb J.-F."/>
            <person name="Adams M.D."/>
            <person name="Reich C.I."/>
            <person name="Overbeek R."/>
            <person name="Kirkness E.F."/>
            <person name="Weinstock K.G."/>
            <person name="Merrick J.M."/>
            <person name="Glodek A."/>
            <person name="Scott J.L."/>
            <person name="Geoghagen N.S.M."/>
            <person name="Weidman J.F."/>
            <person name="Fuhrmann J.L."/>
            <person name="Nguyen D."/>
            <person name="Utterback T.R."/>
            <person name="Kelley J.M."/>
            <person name="Peterson J.D."/>
            <person name="Sadow P.W."/>
            <person name="Hanna M.C."/>
            <person name="Cotton M.D."/>
            <person name="Roberts K.M."/>
            <person name="Hurst M.A."/>
            <person name="Kaine B.P."/>
            <person name="Borodovsky M."/>
            <person name="Klenk H.-P."/>
            <person name="Fraser C.M."/>
            <person name="Smith H.O."/>
            <person name="Woese C.R."/>
            <person name="Venter J.C."/>
        </authorList>
    </citation>
    <scope>NUCLEOTIDE SEQUENCE [LARGE SCALE GENOMIC DNA]</scope>
    <source>
        <strain>ATCC 43067 / DSM 2661 / JAL-1 / JCM 10045 / NBRC 100440</strain>
    </source>
</reference>
<reference key="2">
    <citation type="submission" date="1998-02" db="EMBL/GenBank/DDBJ databases">
        <authorList>
            <person name="Bult C.J."/>
            <person name="White O."/>
            <person name="Olsen G.J."/>
            <person name="Zhou L."/>
            <person name="Fleischmann R.D."/>
            <person name="Sutton G.G."/>
            <person name="Blake J.A."/>
            <person name="FitzGerald L.M."/>
            <person name="Clayton R.A."/>
            <person name="Gocayne J.D."/>
            <person name="Kerlavage A.R."/>
            <person name="Dougherty B.A."/>
            <person name="Tomb J.-F."/>
            <person name="Adams M.D."/>
            <person name="Reich C.I."/>
            <person name="Overbeek R."/>
            <person name="Kirkness E.F."/>
            <person name="Weinstock K.G."/>
            <person name="Merrick J.M."/>
            <person name="Glodek A."/>
            <person name="Scott J.L."/>
            <person name="Geoghagen N.S.M."/>
            <person name="Weidman J.F."/>
            <person name="Fuhrmann J.L."/>
            <person name="Nguyen D."/>
            <person name="Utterback T.R."/>
            <person name="Kelley J.M."/>
            <person name="Peterson J.D."/>
            <person name="Sadow P.W."/>
            <person name="Hanna M.C."/>
            <person name="Cotton M.D."/>
            <person name="Roberts K.M."/>
            <person name="Hurst M.A."/>
            <person name="Kaine B.P."/>
            <person name="Borodovsky M."/>
            <person name="Klenk H.-P."/>
            <person name="Fraser C.M."/>
            <person name="Smith H.O."/>
            <person name="Woese C.R."/>
            <person name="Venter J.C."/>
        </authorList>
    </citation>
    <scope>SEQUENCE REVISION</scope>
</reference>
<sequence>MCIFCKIINGEIPAKVVYEDEHVLAFLDINPRNKGHTLVVPKKHYERFDEMPDDELCNFIKGVKKTVEVLKKLGFDGYNIVNNNGRVAGQEVNHVHFHIIPRYEGDGEVVKFGEVKNVDLDEVLKEIKG</sequence>
<keyword id="KW-1185">Reference proteome</keyword>
<protein>
    <recommendedName>
        <fullName>Uncharacterized HIT-like protein MJ0866</fullName>
    </recommendedName>
</protein>
<feature type="chain" id="PRO_0000109834" description="Uncharacterized HIT-like protein MJ0866">
    <location>
        <begin position="1"/>
        <end position="129"/>
    </location>
</feature>
<feature type="domain" description="HIT" evidence="1">
    <location>
        <begin position="3"/>
        <end position="109"/>
    </location>
</feature>
<feature type="short sequence motif" description="Histidine triad motif">
    <location>
        <begin position="94"/>
        <end position="98"/>
    </location>
</feature>
<name>Y866_METJA</name>
<proteinExistence type="predicted"/>
<accession>Q58276</accession>
<organism>
    <name type="scientific">Methanocaldococcus jannaschii (strain ATCC 43067 / DSM 2661 / JAL-1 / JCM 10045 / NBRC 100440)</name>
    <name type="common">Methanococcus jannaschii</name>
    <dbReference type="NCBI Taxonomy" id="243232"/>
    <lineage>
        <taxon>Archaea</taxon>
        <taxon>Methanobacteriati</taxon>
        <taxon>Methanobacteriota</taxon>
        <taxon>Methanomada group</taxon>
        <taxon>Methanococci</taxon>
        <taxon>Methanococcales</taxon>
        <taxon>Methanocaldococcaceae</taxon>
        <taxon>Methanocaldococcus</taxon>
    </lineage>
</organism>